<reference key="1">
    <citation type="journal article" date="2009" name="Appl. Environ. Microbiol.">
        <title>Three genomes from the phylum Acidobacteria provide insight into the lifestyles of these microorganisms in soils.</title>
        <authorList>
            <person name="Ward N.L."/>
            <person name="Challacombe J.F."/>
            <person name="Janssen P.H."/>
            <person name="Henrissat B."/>
            <person name="Coutinho P.M."/>
            <person name="Wu M."/>
            <person name="Xie G."/>
            <person name="Haft D.H."/>
            <person name="Sait M."/>
            <person name="Badger J."/>
            <person name="Barabote R.D."/>
            <person name="Bradley B."/>
            <person name="Brettin T.S."/>
            <person name="Brinkac L.M."/>
            <person name="Bruce D."/>
            <person name="Creasy T."/>
            <person name="Daugherty S.C."/>
            <person name="Davidsen T.M."/>
            <person name="DeBoy R.T."/>
            <person name="Detter J.C."/>
            <person name="Dodson R.J."/>
            <person name="Durkin A.S."/>
            <person name="Ganapathy A."/>
            <person name="Gwinn-Giglio M."/>
            <person name="Han C.S."/>
            <person name="Khouri H."/>
            <person name="Kiss H."/>
            <person name="Kothari S.P."/>
            <person name="Madupu R."/>
            <person name="Nelson K.E."/>
            <person name="Nelson W.C."/>
            <person name="Paulsen I."/>
            <person name="Penn K."/>
            <person name="Ren Q."/>
            <person name="Rosovitz M.J."/>
            <person name="Selengut J.D."/>
            <person name="Shrivastava S."/>
            <person name="Sullivan S.A."/>
            <person name="Tapia R."/>
            <person name="Thompson L.S."/>
            <person name="Watkins K.L."/>
            <person name="Yang Q."/>
            <person name="Yu C."/>
            <person name="Zafar N."/>
            <person name="Zhou L."/>
            <person name="Kuske C.R."/>
        </authorList>
    </citation>
    <scope>NUCLEOTIDE SEQUENCE [LARGE SCALE GENOMIC DNA]</scope>
    <source>
        <strain>Ellin6076</strain>
    </source>
</reference>
<keyword id="KW-0963">Cytoplasm</keyword>
<keyword id="KW-0460">Magnesium</keyword>
<keyword id="KW-0479">Metal-binding</keyword>
<keyword id="KW-0548">Nucleotidyltransferase</keyword>
<keyword id="KW-0694">RNA-binding</keyword>
<keyword id="KW-0808">Transferase</keyword>
<name>PNP_SOLUE</name>
<comment type="function">
    <text evidence="1">Involved in mRNA degradation. Catalyzes the phosphorolysis of single-stranded polyribonucleotides processively in the 3'- to 5'-direction.</text>
</comment>
<comment type="catalytic activity">
    <reaction evidence="1">
        <text>RNA(n+1) + phosphate = RNA(n) + a ribonucleoside 5'-diphosphate</text>
        <dbReference type="Rhea" id="RHEA:22096"/>
        <dbReference type="Rhea" id="RHEA-COMP:14527"/>
        <dbReference type="Rhea" id="RHEA-COMP:17342"/>
        <dbReference type="ChEBI" id="CHEBI:43474"/>
        <dbReference type="ChEBI" id="CHEBI:57930"/>
        <dbReference type="ChEBI" id="CHEBI:140395"/>
        <dbReference type="EC" id="2.7.7.8"/>
    </reaction>
</comment>
<comment type="cofactor">
    <cofactor evidence="1">
        <name>Mg(2+)</name>
        <dbReference type="ChEBI" id="CHEBI:18420"/>
    </cofactor>
</comment>
<comment type="subcellular location">
    <subcellularLocation>
        <location evidence="1">Cytoplasm</location>
    </subcellularLocation>
</comment>
<comment type="similarity">
    <text evidence="1">Belongs to the polyribonucleotide nucleotidyltransferase family.</text>
</comment>
<dbReference type="EC" id="2.7.7.8" evidence="1"/>
<dbReference type="EMBL" id="CP000473">
    <property type="protein sequence ID" value="ABJ88657.1"/>
    <property type="molecule type" value="Genomic_DNA"/>
</dbReference>
<dbReference type="SMR" id="Q01NW3"/>
<dbReference type="FunCoup" id="Q01NW3">
    <property type="interactions" value="614"/>
</dbReference>
<dbReference type="STRING" id="234267.Acid_7759"/>
<dbReference type="KEGG" id="sus:Acid_7759"/>
<dbReference type="eggNOG" id="COG1185">
    <property type="taxonomic scope" value="Bacteria"/>
</dbReference>
<dbReference type="HOGENOM" id="CLU_004217_2_2_0"/>
<dbReference type="InParanoid" id="Q01NW3"/>
<dbReference type="OrthoDB" id="9804305at2"/>
<dbReference type="GO" id="GO:0005829">
    <property type="term" value="C:cytosol"/>
    <property type="evidence" value="ECO:0007669"/>
    <property type="project" value="TreeGrafter"/>
</dbReference>
<dbReference type="GO" id="GO:0000175">
    <property type="term" value="F:3'-5'-RNA exonuclease activity"/>
    <property type="evidence" value="ECO:0007669"/>
    <property type="project" value="TreeGrafter"/>
</dbReference>
<dbReference type="GO" id="GO:0000287">
    <property type="term" value="F:magnesium ion binding"/>
    <property type="evidence" value="ECO:0007669"/>
    <property type="project" value="UniProtKB-UniRule"/>
</dbReference>
<dbReference type="GO" id="GO:0004654">
    <property type="term" value="F:polyribonucleotide nucleotidyltransferase activity"/>
    <property type="evidence" value="ECO:0007669"/>
    <property type="project" value="UniProtKB-UniRule"/>
</dbReference>
<dbReference type="GO" id="GO:0003723">
    <property type="term" value="F:RNA binding"/>
    <property type="evidence" value="ECO:0007669"/>
    <property type="project" value="UniProtKB-UniRule"/>
</dbReference>
<dbReference type="GO" id="GO:0006402">
    <property type="term" value="P:mRNA catabolic process"/>
    <property type="evidence" value="ECO:0007669"/>
    <property type="project" value="UniProtKB-UniRule"/>
</dbReference>
<dbReference type="GO" id="GO:0006396">
    <property type="term" value="P:RNA processing"/>
    <property type="evidence" value="ECO:0007669"/>
    <property type="project" value="InterPro"/>
</dbReference>
<dbReference type="CDD" id="cd02393">
    <property type="entry name" value="KH-I_PNPase"/>
    <property type="match status" value="1"/>
</dbReference>
<dbReference type="CDD" id="cd11363">
    <property type="entry name" value="RNase_PH_PNPase_1"/>
    <property type="match status" value="1"/>
</dbReference>
<dbReference type="CDD" id="cd11364">
    <property type="entry name" value="RNase_PH_PNPase_2"/>
    <property type="match status" value="1"/>
</dbReference>
<dbReference type="CDD" id="cd04472">
    <property type="entry name" value="S1_PNPase"/>
    <property type="match status" value="1"/>
</dbReference>
<dbReference type="FunFam" id="3.30.1370.10:FF:000001">
    <property type="entry name" value="Polyribonucleotide nucleotidyltransferase"/>
    <property type="match status" value="1"/>
</dbReference>
<dbReference type="FunFam" id="3.30.230.70:FF:000001">
    <property type="entry name" value="Polyribonucleotide nucleotidyltransferase"/>
    <property type="match status" value="1"/>
</dbReference>
<dbReference type="FunFam" id="3.30.230.70:FF:000002">
    <property type="entry name" value="Polyribonucleotide nucleotidyltransferase"/>
    <property type="match status" value="1"/>
</dbReference>
<dbReference type="Gene3D" id="3.30.230.70">
    <property type="entry name" value="GHMP Kinase, N-terminal domain"/>
    <property type="match status" value="2"/>
</dbReference>
<dbReference type="Gene3D" id="3.30.1370.10">
    <property type="entry name" value="K Homology domain, type 1"/>
    <property type="match status" value="1"/>
</dbReference>
<dbReference type="Gene3D" id="2.40.50.140">
    <property type="entry name" value="Nucleic acid-binding proteins"/>
    <property type="match status" value="1"/>
</dbReference>
<dbReference type="HAMAP" id="MF_01595">
    <property type="entry name" value="PNPase"/>
    <property type="match status" value="1"/>
</dbReference>
<dbReference type="InterPro" id="IPR001247">
    <property type="entry name" value="ExoRNase_PH_dom1"/>
</dbReference>
<dbReference type="InterPro" id="IPR015847">
    <property type="entry name" value="ExoRNase_PH_dom2"/>
</dbReference>
<dbReference type="InterPro" id="IPR036345">
    <property type="entry name" value="ExoRNase_PH_dom2_sf"/>
</dbReference>
<dbReference type="InterPro" id="IPR004087">
    <property type="entry name" value="KH_dom"/>
</dbReference>
<dbReference type="InterPro" id="IPR004088">
    <property type="entry name" value="KH_dom_type_1"/>
</dbReference>
<dbReference type="InterPro" id="IPR036612">
    <property type="entry name" value="KH_dom_type_1_sf"/>
</dbReference>
<dbReference type="InterPro" id="IPR012340">
    <property type="entry name" value="NA-bd_OB-fold"/>
</dbReference>
<dbReference type="InterPro" id="IPR012162">
    <property type="entry name" value="PNPase"/>
</dbReference>
<dbReference type="InterPro" id="IPR027408">
    <property type="entry name" value="PNPase/RNase_PH_dom_sf"/>
</dbReference>
<dbReference type="InterPro" id="IPR015848">
    <property type="entry name" value="PNPase_PH_RNA-bd_bac/org-type"/>
</dbReference>
<dbReference type="InterPro" id="IPR036456">
    <property type="entry name" value="PNPase_PH_RNA-bd_sf"/>
</dbReference>
<dbReference type="InterPro" id="IPR020568">
    <property type="entry name" value="Ribosomal_Su5_D2-typ_SF"/>
</dbReference>
<dbReference type="InterPro" id="IPR003029">
    <property type="entry name" value="S1_domain"/>
</dbReference>
<dbReference type="NCBIfam" id="TIGR03591">
    <property type="entry name" value="polynuc_phos"/>
    <property type="match status" value="1"/>
</dbReference>
<dbReference type="NCBIfam" id="NF008805">
    <property type="entry name" value="PRK11824.1"/>
    <property type="match status" value="1"/>
</dbReference>
<dbReference type="PANTHER" id="PTHR11252">
    <property type="entry name" value="POLYRIBONUCLEOTIDE NUCLEOTIDYLTRANSFERASE"/>
    <property type="match status" value="1"/>
</dbReference>
<dbReference type="PANTHER" id="PTHR11252:SF0">
    <property type="entry name" value="POLYRIBONUCLEOTIDE NUCLEOTIDYLTRANSFERASE 1, MITOCHONDRIAL"/>
    <property type="match status" value="1"/>
</dbReference>
<dbReference type="Pfam" id="PF00013">
    <property type="entry name" value="KH_1"/>
    <property type="match status" value="1"/>
</dbReference>
<dbReference type="Pfam" id="PF03726">
    <property type="entry name" value="PNPase"/>
    <property type="match status" value="1"/>
</dbReference>
<dbReference type="Pfam" id="PF01138">
    <property type="entry name" value="RNase_PH"/>
    <property type="match status" value="2"/>
</dbReference>
<dbReference type="Pfam" id="PF03725">
    <property type="entry name" value="RNase_PH_C"/>
    <property type="match status" value="2"/>
</dbReference>
<dbReference type="Pfam" id="PF00575">
    <property type="entry name" value="S1"/>
    <property type="match status" value="1"/>
</dbReference>
<dbReference type="PIRSF" id="PIRSF005499">
    <property type="entry name" value="PNPase"/>
    <property type="match status" value="1"/>
</dbReference>
<dbReference type="SMART" id="SM00322">
    <property type="entry name" value="KH"/>
    <property type="match status" value="1"/>
</dbReference>
<dbReference type="SMART" id="SM00316">
    <property type="entry name" value="S1"/>
    <property type="match status" value="1"/>
</dbReference>
<dbReference type="SUPFAM" id="SSF54791">
    <property type="entry name" value="Eukaryotic type KH-domain (KH-domain type I)"/>
    <property type="match status" value="1"/>
</dbReference>
<dbReference type="SUPFAM" id="SSF50249">
    <property type="entry name" value="Nucleic acid-binding proteins"/>
    <property type="match status" value="1"/>
</dbReference>
<dbReference type="SUPFAM" id="SSF46915">
    <property type="entry name" value="Polynucleotide phosphorylase/guanosine pentaphosphate synthase (PNPase/GPSI), domain 3"/>
    <property type="match status" value="1"/>
</dbReference>
<dbReference type="SUPFAM" id="SSF55666">
    <property type="entry name" value="Ribonuclease PH domain 2-like"/>
    <property type="match status" value="2"/>
</dbReference>
<dbReference type="SUPFAM" id="SSF54211">
    <property type="entry name" value="Ribosomal protein S5 domain 2-like"/>
    <property type="match status" value="2"/>
</dbReference>
<dbReference type="PROSITE" id="PS50084">
    <property type="entry name" value="KH_TYPE_1"/>
    <property type="match status" value="1"/>
</dbReference>
<dbReference type="PROSITE" id="PS50126">
    <property type="entry name" value="S1"/>
    <property type="match status" value="1"/>
</dbReference>
<gene>
    <name evidence="1" type="primary">pnp</name>
    <name type="ordered locus">Acid_7759</name>
</gene>
<organism>
    <name type="scientific">Solibacter usitatus (strain Ellin6076)</name>
    <dbReference type="NCBI Taxonomy" id="234267"/>
    <lineage>
        <taxon>Bacteria</taxon>
        <taxon>Pseudomonadati</taxon>
        <taxon>Acidobacteriota</taxon>
        <taxon>Terriglobia</taxon>
        <taxon>Bryobacterales</taxon>
        <taxon>Solibacteraceae</taxon>
        <taxon>Candidatus Solibacter</taxon>
    </lineage>
</organism>
<feature type="chain" id="PRO_0000329857" description="Polyribonucleotide nucleotidyltransferase">
    <location>
        <begin position="1"/>
        <end position="701"/>
    </location>
</feature>
<feature type="domain" description="KH" evidence="1">
    <location>
        <begin position="550"/>
        <end position="609"/>
    </location>
</feature>
<feature type="domain" description="S1 motif" evidence="1">
    <location>
        <begin position="619"/>
        <end position="686"/>
    </location>
</feature>
<feature type="binding site" evidence="1">
    <location>
        <position position="483"/>
    </location>
    <ligand>
        <name>Mg(2+)</name>
        <dbReference type="ChEBI" id="CHEBI:18420"/>
    </ligand>
</feature>
<feature type="binding site" evidence="1">
    <location>
        <position position="489"/>
    </location>
    <ligand>
        <name>Mg(2+)</name>
        <dbReference type="ChEBI" id="CHEBI:18420"/>
    </ligand>
</feature>
<sequence>MHHIVEVDLGDRKITLETGKMAKQANGAVVVRSGDAVVLVTACMADQPKPSAGFFPLTVDYREYTYAAGKIPGGFIKREGRLSEKEVLTCRLIDRPIRPLFPEGFMNETQIIAMVLSADPEQDPNSLAIVGTAAALAISDIPFQYVMAGVRVGMRDGQYTANPTYTEGRASKLNIVVAGTEEGIVMVEAGAQEVSEAEVLGAIEFGHECCKKIAAGIRQLMKLCGKTKREFVSPVLDETIYAEVEKQARVDLTDALNTEKHEKLASYALVASVKKRTIEALPDEQKEQGAKCFDALKERIFRDDMLKKHRRPDGREFDQIRQITIETGVLPRVHGSTLFTRGETQALVTVTLGTKDDEQRIELLEPGEASKRFMLHYNFPPFSVGEVGFMRGAGRREIGHGALAERALTALIPGEDKFPYTMRVVSDTLESNGSSSMAAICGGSLALMQAGVPMTAHVGGVAMGLVMEGKDYAILTDIAGAEDHYGDMDFKVAGTRDGITGMQMDIKVPNITTAIMKEALEQARRGRLFILDKMYEAMPQANTAISQYAPRIYTLHIPTDKIRDVIGPGGKVIRGIIEQTGVKIDVEDDGTIHVASADEASANKAIQIISDLTATAEIGKTYLGKVVRLVDFGAFVEIFPGTDGLLHISEIAENRIKDVRDELKEGDQILVKCLALEGNKIKLSRKAVLKEQREKMKQGKE</sequence>
<accession>Q01NW3</accession>
<evidence type="ECO:0000255" key="1">
    <source>
        <dbReference type="HAMAP-Rule" id="MF_01595"/>
    </source>
</evidence>
<protein>
    <recommendedName>
        <fullName evidence="1">Polyribonucleotide nucleotidyltransferase</fullName>
        <ecNumber evidence="1">2.7.7.8</ecNumber>
    </recommendedName>
    <alternativeName>
        <fullName evidence="1">Polynucleotide phosphorylase</fullName>
        <shortName evidence="1">PNPase</shortName>
    </alternativeName>
</protein>
<proteinExistence type="inferred from homology"/>